<comment type="function">
    <text evidence="1">Catalyzes the conversion of (8S)-3',8-cyclo-7,8-dihydroguanosine 5'-triphosphate to cyclic pyranopterin monophosphate (cPMP).</text>
</comment>
<comment type="catalytic activity">
    <reaction evidence="1">
        <text>(8S)-3',8-cyclo-7,8-dihydroguanosine 5'-triphosphate = cyclic pyranopterin phosphate + diphosphate</text>
        <dbReference type="Rhea" id="RHEA:49580"/>
        <dbReference type="ChEBI" id="CHEBI:33019"/>
        <dbReference type="ChEBI" id="CHEBI:59648"/>
        <dbReference type="ChEBI" id="CHEBI:131766"/>
        <dbReference type="EC" id="4.6.1.17"/>
    </reaction>
</comment>
<comment type="pathway">
    <text evidence="1">Cofactor biosynthesis; molybdopterin biosynthesis.</text>
</comment>
<comment type="subunit">
    <text evidence="1">Homohexamer; trimer of dimers.</text>
</comment>
<comment type="similarity">
    <text evidence="1">Belongs to the MoaC family.</text>
</comment>
<name>MOAC_TRIL1</name>
<dbReference type="EC" id="4.6.1.17" evidence="1"/>
<dbReference type="EMBL" id="CP001089">
    <property type="protein sequence ID" value="ACD94651.1"/>
    <property type="molecule type" value="Genomic_DNA"/>
</dbReference>
<dbReference type="RefSeq" id="WP_012469001.1">
    <property type="nucleotide sequence ID" value="NC_010814.1"/>
</dbReference>
<dbReference type="SMR" id="B3E5I0"/>
<dbReference type="STRING" id="398767.Glov_0928"/>
<dbReference type="KEGG" id="glo:Glov_0928"/>
<dbReference type="eggNOG" id="COG0315">
    <property type="taxonomic scope" value="Bacteria"/>
</dbReference>
<dbReference type="HOGENOM" id="CLU_074693_1_1_7"/>
<dbReference type="OrthoDB" id="9794429at2"/>
<dbReference type="UniPathway" id="UPA00344"/>
<dbReference type="Proteomes" id="UP000002420">
    <property type="component" value="Chromosome"/>
</dbReference>
<dbReference type="GO" id="GO:0061799">
    <property type="term" value="F:cyclic pyranopterin monophosphate synthase activity"/>
    <property type="evidence" value="ECO:0007669"/>
    <property type="project" value="UniProtKB-UniRule"/>
</dbReference>
<dbReference type="GO" id="GO:0006777">
    <property type="term" value="P:Mo-molybdopterin cofactor biosynthetic process"/>
    <property type="evidence" value="ECO:0007669"/>
    <property type="project" value="UniProtKB-UniRule"/>
</dbReference>
<dbReference type="CDD" id="cd01420">
    <property type="entry name" value="MoaC_PE"/>
    <property type="match status" value="1"/>
</dbReference>
<dbReference type="Gene3D" id="3.30.70.640">
    <property type="entry name" value="Molybdopterin cofactor biosynthesis C (MoaC) domain"/>
    <property type="match status" value="1"/>
</dbReference>
<dbReference type="HAMAP" id="MF_01224_B">
    <property type="entry name" value="MoaC_B"/>
    <property type="match status" value="1"/>
</dbReference>
<dbReference type="InterPro" id="IPR023045">
    <property type="entry name" value="MoaC"/>
</dbReference>
<dbReference type="InterPro" id="IPR047594">
    <property type="entry name" value="MoaC_bact/euk"/>
</dbReference>
<dbReference type="InterPro" id="IPR036522">
    <property type="entry name" value="MoaC_sf"/>
</dbReference>
<dbReference type="InterPro" id="IPR050105">
    <property type="entry name" value="MoCo_biosynth_MoaA/MoaC"/>
</dbReference>
<dbReference type="InterPro" id="IPR002820">
    <property type="entry name" value="Mopterin_CF_biosynth-C_dom"/>
</dbReference>
<dbReference type="NCBIfam" id="TIGR00581">
    <property type="entry name" value="moaC"/>
    <property type="match status" value="1"/>
</dbReference>
<dbReference type="NCBIfam" id="NF006870">
    <property type="entry name" value="PRK09364.1"/>
    <property type="match status" value="1"/>
</dbReference>
<dbReference type="PANTHER" id="PTHR22960:SF29">
    <property type="entry name" value="CYCLIC PYRANOPTERIN MONOPHOSPHATE SYNTHASE"/>
    <property type="match status" value="1"/>
</dbReference>
<dbReference type="PANTHER" id="PTHR22960">
    <property type="entry name" value="MOLYBDOPTERIN COFACTOR SYNTHESIS PROTEIN A"/>
    <property type="match status" value="1"/>
</dbReference>
<dbReference type="Pfam" id="PF01967">
    <property type="entry name" value="MoaC"/>
    <property type="match status" value="1"/>
</dbReference>
<dbReference type="SUPFAM" id="SSF55040">
    <property type="entry name" value="Molybdenum cofactor biosynthesis protein C, MoaC"/>
    <property type="match status" value="1"/>
</dbReference>
<proteinExistence type="inferred from homology"/>
<sequence length="160" mass="17190">MNFNHFDEQGHAVMVDVSSKQETMRTATAAADVIMSAELLAAIARKSVSKGDVLGVARLAGIMAAKKTDDLIPLSHPLSLHSVSIEFDQDPAACRIQARCTVRAFERTGVEMEAMTGAAVAALTIYDMCKGTDKSISIANIRLLYKEGGKSGLYRREEAA</sequence>
<reference key="1">
    <citation type="submission" date="2008-05" db="EMBL/GenBank/DDBJ databases">
        <title>Complete sequence of chromosome of Geobacter lovleyi SZ.</title>
        <authorList>
            <consortium name="US DOE Joint Genome Institute"/>
            <person name="Lucas S."/>
            <person name="Copeland A."/>
            <person name="Lapidus A."/>
            <person name="Glavina del Rio T."/>
            <person name="Dalin E."/>
            <person name="Tice H."/>
            <person name="Bruce D."/>
            <person name="Goodwin L."/>
            <person name="Pitluck S."/>
            <person name="Chertkov O."/>
            <person name="Meincke L."/>
            <person name="Brettin T."/>
            <person name="Detter J.C."/>
            <person name="Han C."/>
            <person name="Tapia R."/>
            <person name="Kuske C.R."/>
            <person name="Schmutz J."/>
            <person name="Larimer F."/>
            <person name="Land M."/>
            <person name="Hauser L."/>
            <person name="Kyrpides N."/>
            <person name="Mikhailova N."/>
            <person name="Sung Y."/>
            <person name="Fletcher K.E."/>
            <person name="Ritalahti K.M."/>
            <person name="Loeffler F.E."/>
            <person name="Richardson P."/>
        </authorList>
    </citation>
    <scope>NUCLEOTIDE SEQUENCE [LARGE SCALE GENOMIC DNA]</scope>
    <source>
        <strain>ATCC BAA-1151 / DSM 17278 / SZ</strain>
    </source>
</reference>
<feature type="chain" id="PRO_1000139271" description="Cyclic pyranopterin monophosphate synthase">
    <location>
        <begin position="1"/>
        <end position="160"/>
    </location>
</feature>
<feature type="active site" evidence="1">
    <location>
        <position position="127"/>
    </location>
</feature>
<feature type="binding site" evidence="1">
    <location>
        <begin position="74"/>
        <end position="76"/>
    </location>
    <ligand>
        <name>substrate</name>
    </ligand>
</feature>
<feature type="binding site" evidence="1">
    <location>
        <begin position="112"/>
        <end position="113"/>
    </location>
    <ligand>
        <name>substrate</name>
    </ligand>
</feature>
<evidence type="ECO:0000255" key="1">
    <source>
        <dbReference type="HAMAP-Rule" id="MF_01224"/>
    </source>
</evidence>
<protein>
    <recommendedName>
        <fullName evidence="1">Cyclic pyranopterin monophosphate synthase</fullName>
        <ecNumber evidence="1">4.6.1.17</ecNumber>
    </recommendedName>
    <alternativeName>
        <fullName evidence="1">Molybdenum cofactor biosynthesis protein C</fullName>
    </alternativeName>
</protein>
<keyword id="KW-0456">Lyase</keyword>
<keyword id="KW-0501">Molybdenum cofactor biosynthesis</keyword>
<keyword id="KW-1185">Reference proteome</keyword>
<organism>
    <name type="scientific">Trichlorobacter lovleyi (strain ATCC BAA-1151 / DSM 17278 / SZ)</name>
    <name type="common">Geobacter lovleyi</name>
    <dbReference type="NCBI Taxonomy" id="398767"/>
    <lineage>
        <taxon>Bacteria</taxon>
        <taxon>Pseudomonadati</taxon>
        <taxon>Thermodesulfobacteriota</taxon>
        <taxon>Desulfuromonadia</taxon>
        <taxon>Geobacterales</taxon>
        <taxon>Geobacteraceae</taxon>
        <taxon>Trichlorobacter</taxon>
    </lineage>
</organism>
<accession>B3E5I0</accession>
<gene>
    <name evidence="1" type="primary">moaC</name>
    <name type="ordered locus">Glov_0928</name>
</gene>